<dbReference type="EC" id="3.1.21.1" evidence="2"/>
<dbReference type="EMBL" id="X56060">
    <property type="status" value="NOT_ANNOTATED_CDS"/>
    <property type="molecule type" value="mRNA"/>
</dbReference>
<dbReference type="EMBL" id="U76635">
    <property type="protein sequence ID" value="AAB71495.1"/>
    <property type="molecule type" value="Genomic_DNA"/>
</dbReference>
<dbReference type="EMBL" id="AF397150">
    <property type="protein sequence ID" value="AAK97471.1"/>
    <property type="molecule type" value="mRNA"/>
</dbReference>
<dbReference type="EMBL" id="AF397151">
    <property type="protein sequence ID" value="AAK97472.1"/>
    <property type="molecule type" value="mRNA"/>
</dbReference>
<dbReference type="EMBL" id="BC089764">
    <property type="protein sequence ID" value="AAH89764.1"/>
    <property type="molecule type" value="mRNA"/>
</dbReference>
<dbReference type="PIR" id="S13676">
    <property type="entry name" value="S13676"/>
</dbReference>
<dbReference type="RefSeq" id="NP_037229.1">
    <property type="nucleotide sequence ID" value="NM_013097.2"/>
</dbReference>
<dbReference type="RefSeq" id="XP_006245891.1">
    <property type="nucleotide sequence ID" value="XM_006245829.3"/>
</dbReference>
<dbReference type="RefSeq" id="XP_063124552.1">
    <property type="nucleotide sequence ID" value="XM_063268482.1"/>
</dbReference>
<dbReference type="RefSeq" id="XP_063124553.1">
    <property type="nucleotide sequence ID" value="XM_063268483.1"/>
</dbReference>
<dbReference type="SMR" id="P21704"/>
<dbReference type="FunCoup" id="P21704">
    <property type="interactions" value="200"/>
</dbReference>
<dbReference type="STRING" id="10116.ENSRNOP00000009283"/>
<dbReference type="GlyCosmos" id="P21704">
    <property type="glycosylation" value="2 sites, No reported glycans"/>
</dbReference>
<dbReference type="GlyGen" id="P21704">
    <property type="glycosylation" value="2 sites"/>
</dbReference>
<dbReference type="PhosphoSitePlus" id="P21704"/>
<dbReference type="PaxDb" id="10116-ENSRNOP00000009283"/>
<dbReference type="Ensembl" id="ENSRNOT00000009283.5">
    <property type="protein sequence ID" value="ENSRNOP00000009283.3"/>
    <property type="gene ID" value="ENSRNOG00000006873.5"/>
</dbReference>
<dbReference type="GeneID" id="25633"/>
<dbReference type="KEGG" id="rno:25633"/>
<dbReference type="UCSC" id="RGD:2510">
    <property type="organism name" value="rat"/>
</dbReference>
<dbReference type="AGR" id="RGD:2510"/>
<dbReference type="CTD" id="1773"/>
<dbReference type="RGD" id="2510">
    <property type="gene designation" value="Dnase1"/>
</dbReference>
<dbReference type="eggNOG" id="ENOG502QQFT">
    <property type="taxonomic scope" value="Eukaryota"/>
</dbReference>
<dbReference type="GeneTree" id="ENSGT00950000182846"/>
<dbReference type="HOGENOM" id="CLU_043335_2_1_1"/>
<dbReference type="InParanoid" id="P21704"/>
<dbReference type="OMA" id="YHFVVSE"/>
<dbReference type="OrthoDB" id="10061407at2759"/>
<dbReference type="PhylomeDB" id="P21704"/>
<dbReference type="TreeFam" id="TF329541"/>
<dbReference type="BRENDA" id="3.1.21.1">
    <property type="organism ID" value="5301"/>
</dbReference>
<dbReference type="PRO" id="PR:P21704"/>
<dbReference type="Proteomes" id="UP000002494">
    <property type="component" value="Chromosome 10"/>
</dbReference>
<dbReference type="Bgee" id="ENSRNOG00000006873">
    <property type="expression patterns" value="Expressed in kidney and 16 other cell types or tissues"/>
</dbReference>
<dbReference type="GO" id="GO:0005737">
    <property type="term" value="C:cytoplasm"/>
    <property type="evidence" value="ECO:0000314"/>
    <property type="project" value="RGD"/>
</dbReference>
<dbReference type="GO" id="GO:0005576">
    <property type="term" value="C:extracellular region"/>
    <property type="evidence" value="ECO:0007669"/>
    <property type="project" value="UniProtKB-SubCell"/>
</dbReference>
<dbReference type="GO" id="GO:0005635">
    <property type="term" value="C:nuclear envelope"/>
    <property type="evidence" value="ECO:0007669"/>
    <property type="project" value="UniProtKB-SubCell"/>
</dbReference>
<dbReference type="GO" id="GO:0005634">
    <property type="term" value="C:nucleus"/>
    <property type="evidence" value="ECO:0000318"/>
    <property type="project" value="GO_Central"/>
</dbReference>
<dbReference type="GO" id="GO:0042588">
    <property type="term" value="C:zymogen granule"/>
    <property type="evidence" value="ECO:0007669"/>
    <property type="project" value="UniProtKB-SubCell"/>
</dbReference>
<dbReference type="GO" id="GO:0003779">
    <property type="term" value="F:actin binding"/>
    <property type="evidence" value="ECO:0007669"/>
    <property type="project" value="UniProtKB-KW"/>
</dbReference>
<dbReference type="GO" id="GO:0004530">
    <property type="term" value="F:deoxyribonuclease I activity"/>
    <property type="evidence" value="ECO:0000314"/>
    <property type="project" value="RGD"/>
</dbReference>
<dbReference type="GO" id="GO:0003677">
    <property type="term" value="F:DNA binding"/>
    <property type="evidence" value="ECO:0000318"/>
    <property type="project" value="GO_Central"/>
</dbReference>
<dbReference type="GO" id="GO:0004536">
    <property type="term" value="F:DNA nuclease activity"/>
    <property type="evidence" value="ECO:0000314"/>
    <property type="project" value="CACAO"/>
</dbReference>
<dbReference type="GO" id="GO:0006915">
    <property type="term" value="P:apoptotic process"/>
    <property type="evidence" value="ECO:0007669"/>
    <property type="project" value="UniProtKB-KW"/>
</dbReference>
<dbReference type="GO" id="GO:0006308">
    <property type="term" value="P:DNA catabolic process"/>
    <property type="evidence" value="ECO:0000250"/>
    <property type="project" value="UniProtKB"/>
</dbReference>
<dbReference type="GO" id="GO:0002283">
    <property type="term" value="P:neutrophil activation involved in immune response"/>
    <property type="evidence" value="ECO:0000250"/>
    <property type="project" value="UniProtKB"/>
</dbReference>
<dbReference type="GO" id="GO:0002673">
    <property type="term" value="P:regulation of acute inflammatory response"/>
    <property type="evidence" value="ECO:0000250"/>
    <property type="project" value="UniProtKB"/>
</dbReference>
<dbReference type="GO" id="GO:0070948">
    <property type="term" value="P:regulation of neutrophil mediated cytotoxicity"/>
    <property type="evidence" value="ECO:0000250"/>
    <property type="project" value="UniProtKB"/>
</dbReference>
<dbReference type="CDD" id="cd10282">
    <property type="entry name" value="DNase1"/>
    <property type="match status" value="1"/>
</dbReference>
<dbReference type="FunFam" id="3.60.10.10:FF:000035">
    <property type="entry name" value="Deoxyribonuclease"/>
    <property type="match status" value="1"/>
</dbReference>
<dbReference type="Gene3D" id="3.60.10.10">
    <property type="entry name" value="Endonuclease/exonuclease/phosphatase"/>
    <property type="match status" value="1"/>
</dbReference>
<dbReference type="InterPro" id="IPR018057">
    <property type="entry name" value="Deoxyribonuclease-1_AS"/>
</dbReference>
<dbReference type="InterPro" id="IPR016202">
    <property type="entry name" value="DNase_I"/>
</dbReference>
<dbReference type="InterPro" id="IPR033125">
    <property type="entry name" value="DNASE_I_2"/>
</dbReference>
<dbReference type="InterPro" id="IPR036691">
    <property type="entry name" value="Endo/exonu/phosph_ase_sf"/>
</dbReference>
<dbReference type="InterPro" id="IPR005135">
    <property type="entry name" value="Endo/exonuclease/phosphatase"/>
</dbReference>
<dbReference type="PANTHER" id="PTHR11371">
    <property type="entry name" value="DEOXYRIBONUCLEASE"/>
    <property type="match status" value="1"/>
</dbReference>
<dbReference type="PANTHER" id="PTHR11371:SF27">
    <property type="entry name" value="DEOXYRIBONUCLEASE-1"/>
    <property type="match status" value="1"/>
</dbReference>
<dbReference type="Pfam" id="PF03372">
    <property type="entry name" value="Exo_endo_phos"/>
    <property type="match status" value="1"/>
</dbReference>
<dbReference type="PIRSF" id="PIRSF000988">
    <property type="entry name" value="DNase_I_euk"/>
    <property type="match status" value="1"/>
</dbReference>
<dbReference type="PRINTS" id="PR00130">
    <property type="entry name" value="DNASEI"/>
</dbReference>
<dbReference type="SMART" id="SM00476">
    <property type="entry name" value="DNaseIc"/>
    <property type="match status" value="1"/>
</dbReference>
<dbReference type="SUPFAM" id="SSF56219">
    <property type="entry name" value="DNase I-like"/>
    <property type="match status" value="1"/>
</dbReference>
<dbReference type="PROSITE" id="PS00919">
    <property type="entry name" value="DNASE_I_1"/>
    <property type="match status" value="1"/>
</dbReference>
<dbReference type="PROSITE" id="PS00918">
    <property type="entry name" value="DNASE_I_2"/>
    <property type="match status" value="1"/>
</dbReference>
<keyword id="KW-0009">Actin-binding</keyword>
<keyword id="KW-0053">Apoptosis</keyword>
<keyword id="KW-0106">Calcium</keyword>
<keyword id="KW-0968">Cytoplasmic vesicle</keyword>
<keyword id="KW-1015">Disulfide bond</keyword>
<keyword id="KW-0255">Endonuclease</keyword>
<keyword id="KW-0325">Glycoprotein</keyword>
<keyword id="KW-0378">Hydrolase</keyword>
<keyword id="KW-0540">Nuclease</keyword>
<keyword id="KW-0539">Nucleus</keyword>
<keyword id="KW-1185">Reference proteome</keyword>
<keyword id="KW-0964">Secreted</keyword>
<keyword id="KW-0732">Signal</keyword>
<accession>P21704</accession>
<accession>Q5FVU6</accession>
<organism>
    <name type="scientific">Rattus norvegicus</name>
    <name type="common">Rat</name>
    <dbReference type="NCBI Taxonomy" id="10116"/>
    <lineage>
        <taxon>Eukaryota</taxon>
        <taxon>Metazoa</taxon>
        <taxon>Chordata</taxon>
        <taxon>Craniata</taxon>
        <taxon>Vertebrata</taxon>
        <taxon>Euteleostomi</taxon>
        <taxon>Mammalia</taxon>
        <taxon>Eutheria</taxon>
        <taxon>Euarchontoglires</taxon>
        <taxon>Glires</taxon>
        <taxon>Rodentia</taxon>
        <taxon>Myomorpha</taxon>
        <taxon>Muroidea</taxon>
        <taxon>Muridae</taxon>
        <taxon>Murinae</taxon>
        <taxon>Rattus</taxon>
    </lineage>
</organism>
<reference key="1">
    <citation type="journal article" date="1990" name="Nucleic Acids Res.">
        <title>Nucleotide sequence of a full length cDNA clone encoding the deoxyribonuclease I from the rat parotid gland.</title>
        <authorList>
            <person name="Polzar B."/>
            <person name="Mannherz H.G."/>
        </authorList>
    </citation>
    <scope>NUCLEOTIDE SEQUENCE [MRNA]</scope>
    <source>
        <strain>Wistar</strain>
        <tissue>Parotid gland</tissue>
    </source>
</reference>
<reference key="2">
    <citation type="journal article" date="1997" name="DNA Cell Biol.">
        <title>DNase I primary transcript is alternatively spliced in both normal and apoptotic cells: no evidence of up-regulation in apoptosis.</title>
        <authorList>
            <person name="Liu Q.Y."/>
            <person name="Ribecco M."/>
            <person name="Hou Y."/>
            <person name="Walker P.R."/>
            <person name="Sikorska M."/>
        </authorList>
    </citation>
    <scope>NUCLEOTIDE SEQUENCE [GENOMIC DNA]</scope>
    <source>
        <strain>Sprague-Dawley</strain>
    </source>
</reference>
<reference key="3">
    <citation type="journal article" date="2002" name="Gene">
        <title>Identification and expression of deoxyribonuclease (DNase) I alternative transcripts in the rat.</title>
        <authorList>
            <person name="Basnakian A.G."/>
            <person name="Singh A.B."/>
            <person name="Shah S.V."/>
        </authorList>
    </citation>
    <scope>NUCLEOTIDE SEQUENCE [MRNA]</scope>
    <source>
        <tissue>Kidney</tissue>
    </source>
</reference>
<reference key="4">
    <citation type="journal article" date="2004" name="Genome Res.">
        <title>The status, quality, and expansion of the NIH full-length cDNA project: the Mammalian Gene Collection (MGC).</title>
        <authorList>
            <consortium name="The MGC Project Team"/>
        </authorList>
    </citation>
    <scope>NUCLEOTIDE SEQUENCE [LARGE SCALE MRNA]</scope>
    <source>
        <tissue>Kidney</tissue>
    </source>
</reference>
<reference key="5">
    <citation type="journal article" date="1993" name="EMBO J.">
        <title>Characterization of the endogenous deoxyribonuclease involved in nuclear DNA degradation during apoptosis (programmed cell death).</title>
        <authorList>
            <person name="Peitsch M.C."/>
            <person name="Polzar B."/>
            <person name="Stephan H."/>
            <person name="Crompton T."/>
            <person name="McDonald H.R."/>
            <person name="Mannherz H.G."/>
            <person name="Tschopp J."/>
        </authorList>
    </citation>
    <scope>FUNCTION</scope>
</reference>
<reference key="6">
    <citation type="journal article" date="2005" name="Biochem. J.">
        <title>Comparative characterization of rat deoxyribonuclease 1 (Dnase1) and murine deoxyribonuclease 1-like 3 (Dnase1l3).</title>
        <authorList>
            <person name="Napirei M."/>
            <person name="Wulf S."/>
            <person name="Eulitz D."/>
            <person name="Mannherz H.G."/>
            <person name="Kloeckl T."/>
        </authorList>
    </citation>
    <scope>FUNCTION</scope>
</reference>
<gene>
    <name type="primary">Dnase1</name>
    <name type="synonym">Dnl1</name>
</gene>
<protein>
    <recommendedName>
        <fullName>Deoxyribonuclease-1</fullName>
        <ecNumber evidence="2">3.1.21.1</ecNumber>
    </recommendedName>
    <alternativeName>
        <fullName>Deoxyribonuclease I</fullName>
        <shortName>DNase I</shortName>
    </alternativeName>
</protein>
<proteinExistence type="evidence at transcript level"/>
<sequence length="284" mass="32064">MRYTGLMGILLTLVNLLQLAATLRIAAFNIRTFGDTKMSNATLSSYIVKILSRYDIAVVQEVRDTHLVAVGKLLDELNRDIPDNYRYIISEPLGRKSYKEQYLFVYRPSQVSVLDSYHYDDGCEPCGNDTFSREPAIVKFFSPYTEVREFAIVPLHSAPTEAVSEIDALYDVYLDVRQKWGLEDIMFMGDFNAGCSYVTSSQWSSIRLRTSPIFQWLIPDSADTTATSTHCAYDRIVVAGALLQAAVVPSSAVPFDFQAEYRLTNQMAEAISDHYPVEVTLRKT</sequence>
<name>DNAS1_RAT</name>
<feature type="signal peptide" evidence="1">
    <location>
        <begin position="1"/>
        <end position="22"/>
    </location>
</feature>
<feature type="chain" id="PRO_0000007281" description="Deoxyribonuclease-1">
    <location>
        <begin position="23"/>
        <end position="284"/>
    </location>
</feature>
<feature type="active site" evidence="1">
    <location>
        <position position="100"/>
    </location>
</feature>
<feature type="active site" evidence="1">
    <location>
        <position position="156"/>
    </location>
</feature>
<feature type="site" description="Nitration by tetranitromethane destroys a Ca(2+) binding site and inactivates enzyme" evidence="1">
    <location>
        <position position="87"/>
    </location>
</feature>
<feature type="glycosylation site" description="N-linked (GlcNAc...) asparagine" evidence="4">
    <location>
        <position position="40"/>
    </location>
</feature>
<feature type="glycosylation site" description="N-linked (GlcNAc...) asparagine" evidence="4">
    <location>
        <position position="128"/>
    </location>
</feature>
<feature type="disulfide bond" evidence="1">
    <location>
        <begin position="123"/>
        <end position="126"/>
    </location>
</feature>
<feature type="disulfide bond" description="Essential for enzymatic activity" evidence="1">
    <location>
        <begin position="195"/>
        <end position="231"/>
    </location>
</feature>
<comment type="function">
    <text evidence="1 3 5 6">Serum endocuclease secreted into body fluids by a wide variety of exocrine and endocrine organs (PubMed:15796714, PubMed:8428592). Expressed by non-hematopoietic tissues and preferentially cleaves protein-free DNA (PubMed:15796714). Among other functions, seems to be involved in cell death by apoptosis (PubMed:15796714, PubMed:8428592). Binds specifically to G-actin and blocks actin polymerization (By similarity). Together with DNASE1L3, plays a key role in degrading neutrophil extracellular traps (NETs) (By similarity). NETs are mainly composed of DNA fibers and are released by neutrophils to bind pathogens during inflammation (By similarity). Degradation of intravascular NETs by DNASE1 and DNASE1L3 is required to prevent formation of clots that obstruct blood vessels and cause organ damage following inflammation (By similarity).</text>
</comment>
<comment type="catalytic activity">
    <reaction evidence="2">
        <text>Endonucleolytic cleavage to 5'-phosphodinucleotide and 5'-phosphooligonucleotide end-products.</text>
        <dbReference type="EC" id="3.1.21.1"/>
    </reaction>
</comment>
<comment type="cofactor">
    <cofactor evidence="2">
        <name>Ca(2+)</name>
        <dbReference type="ChEBI" id="CHEBI:29108"/>
    </cofactor>
    <cofactor evidence="2">
        <name>Mg(2+)</name>
        <dbReference type="ChEBI" id="CHEBI:18420"/>
    </cofactor>
    <text evidence="2">Divalent metal cations. Prefers Ca(2+) or Mg(2+).</text>
</comment>
<comment type="subcellular location">
    <subcellularLocation>
        <location evidence="2">Secreted</location>
    </subcellularLocation>
    <subcellularLocation>
        <location evidence="2">Zymogen granule</location>
    </subcellularLocation>
    <subcellularLocation>
        <location evidence="2">Nucleus envelope</location>
    </subcellularLocation>
    <text evidence="2">Secretory protein, stored in zymogen granules and found in the nuclear envelope.</text>
</comment>
<comment type="similarity">
    <text evidence="7">Belongs to the DNase I family.</text>
</comment>
<evidence type="ECO:0000250" key="1">
    <source>
        <dbReference type="UniProtKB" id="P00639"/>
    </source>
</evidence>
<evidence type="ECO:0000250" key="2">
    <source>
        <dbReference type="UniProtKB" id="P24855"/>
    </source>
</evidence>
<evidence type="ECO:0000250" key="3">
    <source>
        <dbReference type="UniProtKB" id="P49183"/>
    </source>
</evidence>
<evidence type="ECO:0000255" key="4"/>
<evidence type="ECO:0000269" key="5">
    <source>
    </source>
</evidence>
<evidence type="ECO:0000269" key="6">
    <source>
    </source>
</evidence>
<evidence type="ECO:0000305" key="7"/>